<proteinExistence type="inferred from homology"/>
<dbReference type="EC" id="4.2.1.113" evidence="1"/>
<dbReference type="EMBL" id="CP000720">
    <property type="protein sequence ID" value="ABS47810.1"/>
    <property type="molecule type" value="Genomic_DNA"/>
</dbReference>
<dbReference type="RefSeq" id="WP_012104916.1">
    <property type="nucleotide sequence ID" value="NC_009708.1"/>
</dbReference>
<dbReference type="SMR" id="A7FGT5"/>
<dbReference type="KEGG" id="ypi:YpsIP31758_1485"/>
<dbReference type="HOGENOM" id="CLU_030273_0_1_6"/>
<dbReference type="UniPathway" id="UPA00079"/>
<dbReference type="UniPathway" id="UPA01057">
    <property type="reaction ID" value="UER00165"/>
</dbReference>
<dbReference type="Proteomes" id="UP000002412">
    <property type="component" value="Chromosome"/>
</dbReference>
<dbReference type="GO" id="GO:0000287">
    <property type="term" value="F:magnesium ion binding"/>
    <property type="evidence" value="ECO:0007669"/>
    <property type="project" value="UniProtKB-UniRule"/>
</dbReference>
<dbReference type="GO" id="GO:0043748">
    <property type="term" value="F:O-succinylbenzoate synthase activity"/>
    <property type="evidence" value="ECO:0007669"/>
    <property type="project" value="UniProtKB-EC"/>
</dbReference>
<dbReference type="GO" id="GO:0009234">
    <property type="term" value="P:menaquinone biosynthetic process"/>
    <property type="evidence" value="ECO:0007669"/>
    <property type="project" value="UniProtKB-UniRule"/>
</dbReference>
<dbReference type="CDD" id="cd03320">
    <property type="entry name" value="OSBS"/>
    <property type="match status" value="1"/>
</dbReference>
<dbReference type="Gene3D" id="3.20.20.120">
    <property type="entry name" value="Enolase-like C-terminal domain"/>
    <property type="match status" value="1"/>
</dbReference>
<dbReference type="Gene3D" id="3.30.390.10">
    <property type="entry name" value="Enolase-like, N-terminal domain"/>
    <property type="match status" value="1"/>
</dbReference>
<dbReference type="HAMAP" id="MF_00470">
    <property type="entry name" value="MenC_1"/>
    <property type="match status" value="1"/>
</dbReference>
<dbReference type="InterPro" id="IPR036849">
    <property type="entry name" value="Enolase-like_C_sf"/>
</dbReference>
<dbReference type="InterPro" id="IPR029017">
    <property type="entry name" value="Enolase-like_N"/>
</dbReference>
<dbReference type="InterPro" id="IPR029065">
    <property type="entry name" value="Enolase_C-like"/>
</dbReference>
<dbReference type="InterPro" id="IPR013342">
    <property type="entry name" value="Mandelate_racemase_C"/>
</dbReference>
<dbReference type="InterPro" id="IPR010196">
    <property type="entry name" value="OSB_synthase_MenC1"/>
</dbReference>
<dbReference type="InterPro" id="IPR041338">
    <property type="entry name" value="OSBS_N"/>
</dbReference>
<dbReference type="NCBIfam" id="TIGR01927">
    <property type="entry name" value="menC_gam_Gplu"/>
    <property type="match status" value="1"/>
</dbReference>
<dbReference type="NCBIfam" id="NF003473">
    <property type="entry name" value="PRK05105.1"/>
    <property type="match status" value="1"/>
</dbReference>
<dbReference type="PANTHER" id="PTHR48073:SF2">
    <property type="entry name" value="O-SUCCINYLBENZOATE SYNTHASE"/>
    <property type="match status" value="1"/>
</dbReference>
<dbReference type="PANTHER" id="PTHR48073">
    <property type="entry name" value="O-SUCCINYLBENZOATE SYNTHASE-RELATED"/>
    <property type="match status" value="1"/>
</dbReference>
<dbReference type="Pfam" id="PF21508">
    <property type="entry name" value="MenC_N"/>
    <property type="match status" value="1"/>
</dbReference>
<dbReference type="Pfam" id="PF13378">
    <property type="entry name" value="MR_MLE_C"/>
    <property type="match status" value="1"/>
</dbReference>
<dbReference type="SFLD" id="SFLDS00001">
    <property type="entry name" value="Enolase"/>
    <property type="match status" value="1"/>
</dbReference>
<dbReference type="SFLD" id="SFLDF00009">
    <property type="entry name" value="o-succinylbenzoate_synthase"/>
    <property type="match status" value="1"/>
</dbReference>
<dbReference type="SMART" id="SM00922">
    <property type="entry name" value="MR_MLE"/>
    <property type="match status" value="1"/>
</dbReference>
<dbReference type="SUPFAM" id="SSF51604">
    <property type="entry name" value="Enolase C-terminal domain-like"/>
    <property type="match status" value="1"/>
</dbReference>
<dbReference type="SUPFAM" id="SSF54826">
    <property type="entry name" value="Enolase N-terminal domain-like"/>
    <property type="match status" value="1"/>
</dbReference>
<accession>A7FGT5</accession>
<organism>
    <name type="scientific">Yersinia pseudotuberculosis serotype O:1b (strain IP 31758)</name>
    <dbReference type="NCBI Taxonomy" id="349747"/>
    <lineage>
        <taxon>Bacteria</taxon>
        <taxon>Pseudomonadati</taxon>
        <taxon>Pseudomonadota</taxon>
        <taxon>Gammaproteobacteria</taxon>
        <taxon>Enterobacterales</taxon>
        <taxon>Yersiniaceae</taxon>
        <taxon>Yersinia</taxon>
    </lineage>
</organism>
<reference key="1">
    <citation type="journal article" date="2007" name="PLoS Genet.">
        <title>The complete genome sequence of Yersinia pseudotuberculosis IP31758, the causative agent of Far East scarlet-like fever.</title>
        <authorList>
            <person name="Eppinger M."/>
            <person name="Rosovitz M.J."/>
            <person name="Fricke W.F."/>
            <person name="Rasko D.A."/>
            <person name="Kokorina G."/>
            <person name="Fayolle C."/>
            <person name="Lindler L.E."/>
            <person name="Carniel E."/>
            <person name="Ravel J."/>
        </authorList>
    </citation>
    <scope>NUCLEOTIDE SEQUENCE [LARGE SCALE GENOMIC DNA]</scope>
    <source>
        <strain>IP 31758</strain>
    </source>
</reference>
<feature type="chain" id="PRO_1000060379" description="o-succinylbenzoate synthase">
    <location>
        <begin position="1"/>
        <end position="323"/>
    </location>
</feature>
<feature type="active site" description="Proton donor" evidence="1">
    <location>
        <position position="134"/>
    </location>
</feature>
<feature type="active site" description="Proton acceptor" evidence="1">
    <location>
        <position position="236"/>
    </location>
</feature>
<feature type="binding site" evidence="1">
    <location>
        <position position="162"/>
    </location>
    <ligand>
        <name>Mg(2+)</name>
        <dbReference type="ChEBI" id="CHEBI:18420"/>
    </ligand>
</feature>
<feature type="binding site" evidence="1">
    <location>
        <position position="191"/>
    </location>
    <ligand>
        <name>Mg(2+)</name>
        <dbReference type="ChEBI" id="CHEBI:18420"/>
    </ligand>
</feature>
<feature type="binding site" evidence="1">
    <location>
        <position position="214"/>
    </location>
    <ligand>
        <name>Mg(2+)</name>
        <dbReference type="ChEBI" id="CHEBI:18420"/>
    </ligand>
</feature>
<name>MENC_YERP3</name>
<keyword id="KW-0456">Lyase</keyword>
<keyword id="KW-0460">Magnesium</keyword>
<keyword id="KW-0474">Menaquinone biosynthesis</keyword>
<keyword id="KW-0479">Metal-binding</keyword>
<comment type="function">
    <text evidence="1">Converts 2-succinyl-6-hydroxy-2,4-cyclohexadiene-1-carboxylate (SHCHC) to 2-succinylbenzoate (OSB).</text>
</comment>
<comment type="catalytic activity">
    <reaction evidence="1">
        <text>(1R,6R)-6-hydroxy-2-succinyl-cyclohexa-2,4-diene-1-carboxylate = 2-succinylbenzoate + H2O</text>
        <dbReference type="Rhea" id="RHEA:10196"/>
        <dbReference type="ChEBI" id="CHEBI:15377"/>
        <dbReference type="ChEBI" id="CHEBI:18325"/>
        <dbReference type="ChEBI" id="CHEBI:58689"/>
        <dbReference type="EC" id="4.2.1.113"/>
    </reaction>
</comment>
<comment type="cofactor">
    <cofactor evidence="1">
        <name>a divalent metal cation</name>
        <dbReference type="ChEBI" id="CHEBI:60240"/>
    </cofactor>
</comment>
<comment type="pathway">
    <text evidence="1">Quinol/quinone metabolism; 1,4-dihydroxy-2-naphthoate biosynthesis; 1,4-dihydroxy-2-naphthoate from chorismate: step 4/7.</text>
</comment>
<comment type="pathway">
    <text evidence="1">Quinol/quinone metabolism; menaquinone biosynthesis.</text>
</comment>
<comment type="similarity">
    <text evidence="1">Belongs to the mandelate racemase/muconate lactonizing enzyme family. MenC type 1 subfamily.</text>
</comment>
<protein>
    <recommendedName>
        <fullName evidence="1">o-succinylbenzoate synthase</fullName>
        <shortName evidence="1">OSB synthase</shortName>
        <shortName evidence="1">OSBS</shortName>
        <ecNumber evidence="1">4.2.1.113</ecNumber>
    </recommendedName>
    <alternativeName>
        <fullName evidence="1">4-(2'-carboxyphenyl)-4-oxybutyric acid synthase</fullName>
    </alternativeName>
    <alternativeName>
        <fullName evidence="1">o-succinylbenzoic acid synthase</fullName>
    </alternativeName>
</protein>
<sequence length="323" mass="35271">MRTATLYRYSVPMEAGVILRHQRLKSRDGLLVKLQQGELSGWGEIAPLPEFSQETLDQAQVAAECWLQHWVSGVESDDSVLPSVAFGLSCAQAELNQTLPLSADYRKAPLCTGDPDELFAVLQALPGEKVAKVKVGLYEAVRDGMIVNVLLEALPDLTLRLDANRSWSRAKADGFAKYVNPALRSRIAFLEEPCKTRAESREFAQDTGIAIAWDESVREADFQVEAEPGVAAIVIKPTLVGSLSRCQQLVQQAHQAGLVAVISSSIESSLGLTQLARLAAWLTPATVPGLDTLDLMQAQVVRPWPDSPLPLITTEQLGVVWHR</sequence>
<gene>
    <name evidence="1" type="primary">menC</name>
    <name type="ordered locus">YpsIP31758_1485</name>
</gene>
<evidence type="ECO:0000255" key="1">
    <source>
        <dbReference type="HAMAP-Rule" id="MF_00470"/>
    </source>
</evidence>